<sequence>MEIQNNLYGIDLYTILPESILIFCLLTTLIIDLSLDSKNKSWIIYLNTIGLILSGLFLCLQWNGIIPVTPFPSFKGDSFSIAFRFCIIIASLLSLLLSIDYIKRAGVQLMEFVIFLLGATIGGMFLCGANDLITIFTSLECLGLSSYLLAGYSKQDIRSNEAAMKYLLVGGASSAILAYGFSWLYGLSGGKIILSEIVDGLIFADFVNPLIKWITLTCIIVGLGFKISAVPFHQWTPDVYEGSPTPVVAFLSVASKTAGLALTIRIIATIFPYLENEWQFLLQILACLTMIVGNLVAITQTSMKRMLAYSSISQAGYLMIGIISSTNDGYASSLVYMLIYIFMNLGAFGCVILFGLRTGTDQIRDFSGLYLKDPWLASCLTIFLLSLGGIPPFAGFFGKIYLFWSGWQAGLYILTFVGLLTSVISIYYYLRIIKIMFVREAKEFSSYVKNYVIPVNSLLPQSSVETAMIVCMIASSVMGIAINPIIQVAQKTILSTIPFI</sequence>
<keyword id="KW-0150">Chloroplast</keyword>
<keyword id="KW-0472">Membrane</keyword>
<keyword id="KW-0520">NAD</keyword>
<keyword id="KW-0521">NADP</keyword>
<keyword id="KW-0934">Plastid</keyword>
<keyword id="KW-0618">Plastoquinone</keyword>
<keyword id="KW-0874">Quinone</keyword>
<keyword id="KW-0793">Thylakoid</keyword>
<keyword id="KW-1278">Translocase</keyword>
<keyword id="KW-0812">Transmembrane</keyword>
<keyword id="KW-1133">Transmembrane helix</keyword>
<keyword id="KW-0813">Transport</keyword>
<feature type="chain" id="PRO_0000225341" description="NAD(P)H-quinone oxidoreductase subunit 2, chloroplastic">
    <location>
        <begin position="1"/>
        <end position="500"/>
    </location>
</feature>
<feature type="transmembrane region" description="Helical" evidence="1">
    <location>
        <begin position="15"/>
        <end position="35"/>
    </location>
</feature>
<feature type="transmembrane region" description="Helical" evidence="1">
    <location>
        <begin position="42"/>
        <end position="62"/>
    </location>
</feature>
<feature type="transmembrane region" description="Helical" evidence="1">
    <location>
        <begin position="79"/>
        <end position="99"/>
    </location>
</feature>
<feature type="transmembrane region" description="Helical" evidence="1">
    <location>
        <begin position="109"/>
        <end position="129"/>
    </location>
</feature>
<feature type="transmembrane region" description="Helical" evidence="1">
    <location>
        <begin position="132"/>
        <end position="152"/>
    </location>
</feature>
<feature type="transmembrane region" description="Helical" evidence="1">
    <location>
        <begin position="167"/>
        <end position="187"/>
    </location>
</feature>
<feature type="transmembrane region" description="Helical" evidence="1">
    <location>
        <begin position="201"/>
        <end position="221"/>
    </location>
</feature>
<feature type="transmembrane region" description="Helical" evidence="1">
    <location>
        <begin position="247"/>
        <end position="267"/>
    </location>
</feature>
<feature type="transmembrane region" description="Helical" evidence="1">
    <location>
        <begin position="278"/>
        <end position="298"/>
    </location>
</feature>
<feature type="transmembrane region" description="Helical" evidence="1">
    <location>
        <begin position="306"/>
        <end position="326"/>
    </location>
</feature>
<feature type="transmembrane region" description="Helical" evidence="1">
    <location>
        <begin position="334"/>
        <end position="354"/>
    </location>
</feature>
<feature type="transmembrane region" description="Helical" evidence="1">
    <location>
        <begin position="377"/>
        <end position="397"/>
    </location>
</feature>
<feature type="transmembrane region" description="Helical" evidence="1">
    <location>
        <begin position="400"/>
        <end position="420"/>
    </location>
</feature>
<proteinExistence type="inferred from homology"/>
<name>NU2C_CHAGL</name>
<organism>
    <name type="scientific">Chaetosphaeridium globosum</name>
    <name type="common">Charophycean green alga</name>
    <name type="synonym">Herposteiron globosum</name>
    <dbReference type="NCBI Taxonomy" id="96477"/>
    <lineage>
        <taxon>Eukaryota</taxon>
        <taxon>Viridiplantae</taxon>
        <taxon>Streptophyta</taxon>
        <taxon>Coleochaetophyceae</taxon>
        <taxon>Coleochaetales</taxon>
        <taxon>Chaetosphaeridiaceae</taxon>
        <taxon>Chaetosphaeridium</taxon>
    </lineage>
</organism>
<evidence type="ECO:0000255" key="1">
    <source>
        <dbReference type="HAMAP-Rule" id="MF_00445"/>
    </source>
</evidence>
<geneLocation type="chloroplast"/>
<accession>Q8MA16</accession>
<dbReference type="EC" id="7.1.1.-" evidence="1"/>
<dbReference type="EMBL" id="AF494278">
    <property type="protein sequence ID" value="AAM96515.1"/>
    <property type="molecule type" value="Genomic_DNA"/>
</dbReference>
<dbReference type="RefSeq" id="NP_683770.1">
    <property type="nucleotide sequence ID" value="NC_004115.1"/>
</dbReference>
<dbReference type="SMR" id="Q8MA16"/>
<dbReference type="GeneID" id="860745"/>
<dbReference type="GO" id="GO:0009535">
    <property type="term" value="C:chloroplast thylakoid membrane"/>
    <property type="evidence" value="ECO:0007669"/>
    <property type="project" value="UniProtKB-SubCell"/>
</dbReference>
<dbReference type="GO" id="GO:0008137">
    <property type="term" value="F:NADH dehydrogenase (ubiquinone) activity"/>
    <property type="evidence" value="ECO:0007669"/>
    <property type="project" value="InterPro"/>
</dbReference>
<dbReference type="GO" id="GO:0048038">
    <property type="term" value="F:quinone binding"/>
    <property type="evidence" value="ECO:0007669"/>
    <property type="project" value="UniProtKB-KW"/>
</dbReference>
<dbReference type="GO" id="GO:0042773">
    <property type="term" value="P:ATP synthesis coupled electron transport"/>
    <property type="evidence" value="ECO:0007669"/>
    <property type="project" value="InterPro"/>
</dbReference>
<dbReference type="GO" id="GO:0019684">
    <property type="term" value="P:photosynthesis, light reaction"/>
    <property type="evidence" value="ECO:0007669"/>
    <property type="project" value="UniProtKB-UniRule"/>
</dbReference>
<dbReference type="HAMAP" id="MF_00445">
    <property type="entry name" value="NDH1_NuoN_1"/>
    <property type="match status" value="1"/>
</dbReference>
<dbReference type="InterPro" id="IPR010096">
    <property type="entry name" value="NADH-Q_OxRdtase_suN/2"/>
</dbReference>
<dbReference type="InterPro" id="IPR001750">
    <property type="entry name" value="ND/Mrp_TM"/>
</dbReference>
<dbReference type="InterPro" id="IPR045693">
    <property type="entry name" value="Ndh2_N"/>
</dbReference>
<dbReference type="NCBIfam" id="TIGR01770">
    <property type="entry name" value="NDH_I_N"/>
    <property type="match status" value="1"/>
</dbReference>
<dbReference type="NCBIfam" id="NF002701">
    <property type="entry name" value="PRK02504.1"/>
    <property type="match status" value="1"/>
</dbReference>
<dbReference type="PANTHER" id="PTHR22773">
    <property type="entry name" value="NADH DEHYDROGENASE"/>
    <property type="match status" value="1"/>
</dbReference>
<dbReference type="Pfam" id="PF19530">
    <property type="entry name" value="Ndh2_N"/>
    <property type="match status" value="1"/>
</dbReference>
<dbReference type="Pfam" id="PF00361">
    <property type="entry name" value="Proton_antipo_M"/>
    <property type="match status" value="1"/>
</dbReference>
<protein>
    <recommendedName>
        <fullName evidence="1">NAD(P)H-quinone oxidoreductase subunit 2, chloroplastic</fullName>
        <ecNumber evidence="1">7.1.1.-</ecNumber>
    </recommendedName>
    <alternativeName>
        <fullName evidence="1">NAD(P)H dehydrogenase, subunit 2</fullName>
    </alternativeName>
    <alternativeName>
        <fullName evidence="1">NADH-plastoquinone oxidoreductase subunit 2</fullName>
    </alternativeName>
</protein>
<gene>
    <name evidence="1" type="primary">ndhB</name>
</gene>
<comment type="function">
    <text evidence="1">NDH shuttles electrons from NAD(P)H:plastoquinone, via FMN and iron-sulfur (Fe-S) centers, to quinones in the photosynthetic chain and possibly in a chloroplast respiratory chain. The immediate electron acceptor for the enzyme in this species is believed to be plastoquinone. Couples the redox reaction to proton translocation, and thus conserves the redox energy in a proton gradient.</text>
</comment>
<comment type="catalytic activity">
    <reaction evidence="1">
        <text>a plastoquinone + NADH + (n+1) H(+)(in) = a plastoquinol + NAD(+) + n H(+)(out)</text>
        <dbReference type="Rhea" id="RHEA:42608"/>
        <dbReference type="Rhea" id="RHEA-COMP:9561"/>
        <dbReference type="Rhea" id="RHEA-COMP:9562"/>
        <dbReference type="ChEBI" id="CHEBI:15378"/>
        <dbReference type="ChEBI" id="CHEBI:17757"/>
        <dbReference type="ChEBI" id="CHEBI:57540"/>
        <dbReference type="ChEBI" id="CHEBI:57945"/>
        <dbReference type="ChEBI" id="CHEBI:62192"/>
    </reaction>
</comment>
<comment type="catalytic activity">
    <reaction evidence="1">
        <text>a plastoquinone + NADPH + (n+1) H(+)(in) = a plastoquinol + NADP(+) + n H(+)(out)</text>
        <dbReference type="Rhea" id="RHEA:42612"/>
        <dbReference type="Rhea" id="RHEA-COMP:9561"/>
        <dbReference type="Rhea" id="RHEA-COMP:9562"/>
        <dbReference type="ChEBI" id="CHEBI:15378"/>
        <dbReference type="ChEBI" id="CHEBI:17757"/>
        <dbReference type="ChEBI" id="CHEBI:57783"/>
        <dbReference type="ChEBI" id="CHEBI:58349"/>
        <dbReference type="ChEBI" id="CHEBI:62192"/>
    </reaction>
</comment>
<comment type="subunit">
    <text evidence="1">NDH is composed of at least 16 different subunits, 5 of which are encoded in the nucleus.</text>
</comment>
<comment type="subcellular location">
    <subcellularLocation>
        <location evidence="1">Plastid</location>
        <location evidence="1">Chloroplast thylakoid membrane</location>
        <topology evidence="1">Multi-pass membrane protein</topology>
    </subcellularLocation>
</comment>
<comment type="similarity">
    <text evidence="1">Belongs to the complex I subunit 2 family.</text>
</comment>
<reference key="1">
    <citation type="journal article" date="2002" name="Proc. Natl. Acad. Sci. U.S.A.">
        <title>The chloroplast and mitochondrial genome sequences of the charophyte Chaetosphaeridium globosum: insights into the timing of the events that restructured organelle DNAs within the green algal lineage that led to land plants.</title>
        <authorList>
            <person name="Turmel M."/>
            <person name="Otis C."/>
            <person name="Lemieux C."/>
        </authorList>
    </citation>
    <scope>NUCLEOTIDE SEQUENCE [LARGE SCALE GENOMIC DNA]</scope>
    <source>
        <strain>M1311</strain>
    </source>
</reference>